<name>CTSR_STAAR</name>
<feature type="chain" id="PRO_0000274134" description="Transcriptional regulator CtsR">
    <location>
        <begin position="1"/>
        <end position="153"/>
    </location>
</feature>
<accession>Q6GJE7</accession>
<organism>
    <name type="scientific">Staphylococcus aureus (strain MRSA252)</name>
    <dbReference type="NCBI Taxonomy" id="282458"/>
    <lineage>
        <taxon>Bacteria</taxon>
        <taxon>Bacillati</taxon>
        <taxon>Bacillota</taxon>
        <taxon>Bacilli</taxon>
        <taxon>Bacillales</taxon>
        <taxon>Staphylococcaceae</taxon>
        <taxon>Staphylococcus</taxon>
    </lineage>
</organism>
<evidence type="ECO:0000250" key="1"/>
<evidence type="ECO:0000305" key="2"/>
<comment type="function">
    <text evidence="1">Negative regulator of clpC, clpB and clpP transcription by binding directly and specifically to their promoter region.</text>
</comment>
<comment type="similarity">
    <text evidence="2">Belongs to the CtsR family.</text>
</comment>
<protein>
    <recommendedName>
        <fullName>Transcriptional regulator CtsR</fullName>
    </recommendedName>
</protein>
<proteinExistence type="inferred from homology"/>
<keyword id="KW-0238">DNA-binding</keyword>
<keyword id="KW-0678">Repressor</keyword>
<keyword id="KW-0346">Stress response</keyword>
<keyword id="KW-0804">Transcription</keyword>
<keyword id="KW-0805">Transcription regulation</keyword>
<dbReference type="EMBL" id="BX571856">
    <property type="protein sequence ID" value="CAG39547.1"/>
    <property type="molecule type" value="Genomic_DNA"/>
</dbReference>
<dbReference type="RefSeq" id="WP_000551762.1">
    <property type="nucleotide sequence ID" value="NC_002952.2"/>
</dbReference>
<dbReference type="SMR" id="Q6GJE7"/>
<dbReference type="KEGG" id="sar:SAR0525"/>
<dbReference type="HOGENOM" id="CLU_118139_0_0_9"/>
<dbReference type="Proteomes" id="UP000000596">
    <property type="component" value="Chromosome"/>
</dbReference>
<dbReference type="GO" id="GO:0003677">
    <property type="term" value="F:DNA binding"/>
    <property type="evidence" value="ECO:0007669"/>
    <property type="project" value="UniProtKB-KW"/>
</dbReference>
<dbReference type="GO" id="GO:0006355">
    <property type="term" value="P:regulation of DNA-templated transcription"/>
    <property type="evidence" value="ECO:0007669"/>
    <property type="project" value="InterPro"/>
</dbReference>
<dbReference type="FunFam" id="1.10.1200.150:FF:000002">
    <property type="entry name" value="Transcriptional regulator CtsR"/>
    <property type="match status" value="1"/>
</dbReference>
<dbReference type="FunFam" id="3.30.56.130:FF:000001">
    <property type="entry name" value="Transcriptional regulator CtsR"/>
    <property type="match status" value="1"/>
</dbReference>
<dbReference type="Gene3D" id="1.10.1200.150">
    <property type="entry name" value="Transcriptional regulator CtsR, C-terminal domain"/>
    <property type="match status" value="1"/>
</dbReference>
<dbReference type="Gene3D" id="3.30.56.130">
    <property type="entry name" value="Transcriptional regulator CtsR, winged HTH domain"/>
    <property type="match status" value="1"/>
</dbReference>
<dbReference type="InterPro" id="IPR008463">
    <property type="entry name" value="CtsR"/>
</dbReference>
<dbReference type="InterPro" id="IPR041473">
    <property type="entry name" value="CtsR_C"/>
</dbReference>
<dbReference type="InterPro" id="IPR041908">
    <property type="entry name" value="CtsR_C_sf"/>
</dbReference>
<dbReference type="InterPro" id="IPR040465">
    <property type="entry name" value="CtsR_N"/>
</dbReference>
<dbReference type="InterPro" id="IPR041902">
    <property type="entry name" value="CtsR_N_sf"/>
</dbReference>
<dbReference type="Pfam" id="PF05848">
    <property type="entry name" value="CtsR"/>
    <property type="match status" value="1"/>
</dbReference>
<dbReference type="Pfam" id="PF17727">
    <property type="entry name" value="CtsR_C"/>
    <property type="match status" value="1"/>
</dbReference>
<dbReference type="PIRSF" id="PIRSF010607">
    <property type="entry name" value="Txn_repr_CtsR"/>
    <property type="match status" value="1"/>
</dbReference>
<sequence>MHNMSDIIEQYIKRLFEESNEDVVEIQRANIAQRFDCVPSQLNYVIKTRFTNEHGYEIESKRGGGGYIRITKIENKDATGYINHLLQLIGPSISQQQAYYIIDGLLDKMLINEREAKMIQAVIDRETLSMDMVSRDIIRANILKRLLPVINYY</sequence>
<gene>
    <name type="primary">ctsR</name>
    <name type="ordered locus">SAR0525</name>
</gene>
<reference key="1">
    <citation type="journal article" date="2004" name="Proc. Natl. Acad. Sci. U.S.A.">
        <title>Complete genomes of two clinical Staphylococcus aureus strains: evidence for the rapid evolution of virulence and drug resistance.</title>
        <authorList>
            <person name="Holden M.T.G."/>
            <person name="Feil E.J."/>
            <person name="Lindsay J.A."/>
            <person name="Peacock S.J."/>
            <person name="Day N.P.J."/>
            <person name="Enright M.C."/>
            <person name="Foster T.J."/>
            <person name="Moore C.E."/>
            <person name="Hurst L."/>
            <person name="Atkin R."/>
            <person name="Barron A."/>
            <person name="Bason N."/>
            <person name="Bentley S.D."/>
            <person name="Chillingworth C."/>
            <person name="Chillingworth T."/>
            <person name="Churcher C."/>
            <person name="Clark L."/>
            <person name="Corton C."/>
            <person name="Cronin A."/>
            <person name="Doggett J."/>
            <person name="Dowd L."/>
            <person name="Feltwell T."/>
            <person name="Hance Z."/>
            <person name="Harris B."/>
            <person name="Hauser H."/>
            <person name="Holroyd S."/>
            <person name="Jagels K."/>
            <person name="James K.D."/>
            <person name="Lennard N."/>
            <person name="Line A."/>
            <person name="Mayes R."/>
            <person name="Moule S."/>
            <person name="Mungall K."/>
            <person name="Ormond D."/>
            <person name="Quail M.A."/>
            <person name="Rabbinowitsch E."/>
            <person name="Rutherford K.M."/>
            <person name="Sanders M."/>
            <person name="Sharp S."/>
            <person name="Simmonds M."/>
            <person name="Stevens K."/>
            <person name="Whitehead S."/>
            <person name="Barrell B.G."/>
            <person name="Spratt B.G."/>
            <person name="Parkhill J."/>
        </authorList>
    </citation>
    <scope>NUCLEOTIDE SEQUENCE [LARGE SCALE GENOMIC DNA]</scope>
    <source>
        <strain>MRSA252</strain>
    </source>
</reference>